<evidence type="ECO:0000255" key="1">
    <source>
        <dbReference type="HAMAP-Rule" id="MF_00135"/>
    </source>
</evidence>
<reference key="1">
    <citation type="journal article" date="2003" name="Nat. Genet.">
        <title>Comparative analysis of the genome sequences of Bordetella pertussis, Bordetella parapertussis and Bordetella bronchiseptica.</title>
        <authorList>
            <person name="Parkhill J."/>
            <person name="Sebaihia M."/>
            <person name="Preston A."/>
            <person name="Murphy L.D."/>
            <person name="Thomson N.R."/>
            <person name="Harris D.E."/>
            <person name="Holden M.T.G."/>
            <person name="Churcher C.M."/>
            <person name="Bentley S.D."/>
            <person name="Mungall K.L."/>
            <person name="Cerdeno-Tarraga A.-M."/>
            <person name="Temple L."/>
            <person name="James K.D."/>
            <person name="Harris B."/>
            <person name="Quail M.A."/>
            <person name="Achtman M."/>
            <person name="Atkin R."/>
            <person name="Baker S."/>
            <person name="Basham D."/>
            <person name="Bason N."/>
            <person name="Cherevach I."/>
            <person name="Chillingworth T."/>
            <person name="Collins M."/>
            <person name="Cronin A."/>
            <person name="Davis P."/>
            <person name="Doggett J."/>
            <person name="Feltwell T."/>
            <person name="Goble A."/>
            <person name="Hamlin N."/>
            <person name="Hauser H."/>
            <person name="Holroyd S."/>
            <person name="Jagels K."/>
            <person name="Leather S."/>
            <person name="Moule S."/>
            <person name="Norberczak H."/>
            <person name="O'Neil S."/>
            <person name="Ormond D."/>
            <person name="Price C."/>
            <person name="Rabbinowitsch E."/>
            <person name="Rutter S."/>
            <person name="Sanders M."/>
            <person name="Saunders D."/>
            <person name="Seeger K."/>
            <person name="Sharp S."/>
            <person name="Simmonds M."/>
            <person name="Skelton J."/>
            <person name="Squares R."/>
            <person name="Squares S."/>
            <person name="Stevens K."/>
            <person name="Unwin L."/>
            <person name="Whitehead S."/>
            <person name="Barrell B.G."/>
            <person name="Maskell D.J."/>
        </authorList>
    </citation>
    <scope>NUCLEOTIDE SEQUENCE [LARGE SCALE GENOMIC DNA]</scope>
    <source>
        <strain>12822 / ATCC BAA-587 / NCTC 13253</strain>
    </source>
</reference>
<proteinExistence type="inferred from homology"/>
<keyword id="KW-0028">Amino-acid biosynthesis</keyword>
<keyword id="KW-0057">Aromatic amino acid biosynthesis</keyword>
<keyword id="KW-0413">Isomerase</keyword>
<keyword id="KW-0822">Tryptophan biosynthesis</keyword>
<gene>
    <name evidence="1" type="primary">trpF</name>
    <name type="ordered locus">BPP1951</name>
</gene>
<accession>Q7W923</accession>
<name>TRPF_BORPA</name>
<feature type="chain" id="PRO_1000076431" description="N-(5'-phosphoribosyl)anthranilate isomerase">
    <location>
        <begin position="1"/>
        <end position="218"/>
    </location>
</feature>
<dbReference type="EC" id="5.3.1.24" evidence="1"/>
<dbReference type="EMBL" id="BX640428">
    <property type="protein sequence ID" value="CAE37251.1"/>
    <property type="molecule type" value="Genomic_DNA"/>
</dbReference>
<dbReference type="RefSeq" id="WP_010928295.1">
    <property type="nucleotide sequence ID" value="NC_002928.3"/>
</dbReference>
<dbReference type="SMR" id="Q7W923"/>
<dbReference type="GeneID" id="93203723"/>
<dbReference type="KEGG" id="bpa:BPP1951"/>
<dbReference type="HOGENOM" id="CLU_076364_2_0_4"/>
<dbReference type="UniPathway" id="UPA00035">
    <property type="reaction ID" value="UER00042"/>
</dbReference>
<dbReference type="Proteomes" id="UP000001421">
    <property type="component" value="Chromosome"/>
</dbReference>
<dbReference type="GO" id="GO:0004640">
    <property type="term" value="F:phosphoribosylanthranilate isomerase activity"/>
    <property type="evidence" value="ECO:0007669"/>
    <property type="project" value="UniProtKB-UniRule"/>
</dbReference>
<dbReference type="GO" id="GO:0000162">
    <property type="term" value="P:L-tryptophan biosynthetic process"/>
    <property type="evidence" value="ECO:0007669"/>
    <property type="project" value="UniProtKB-UniRule"/>
</dbReference>
<dbReference type="CDD" id="cd00405">
    <property type="entry name" value="PRAI"/>
    <property type="match status" value="1"/>
</dbReference>
<dbReference type="Gene3D" id="3.20.20.70">
    <property type="entry name" value="Aldolase class I"/>
    <property type="match status" value="1"/>
</dbReference>
<dbReference type="HAMAP" id="MF_00135">
    <property type="entry name" value="PRAI"/>
    <property type="match status" value="1"/>
</dbReference>
<dbReference type="InterPro" id="IPR013785">
    <property type="entry name" value="Aldolase_TIM"/>
</dbReference>
<dbReference type="InterPro" id="IPR001240">
    <property type="entry name" value="PRAI_dom"/>
</dbReference>
<dbReference type="InterPro" id="IPR011060">
    <property type="entry name" value="RibuloseP-bd_barrel"/>
</dbReference>
<dbReference type="InterPro" id="IPR044643">
    <property type="entry name" value="TrpF_fam"/>
</dbReference>
<dbReference type="NCBIfam" id="NF002298">
    <property type="entry name" value="PRK01222.1-4"/>
    <property type="match status" value="1"/>
</dbReference>
<dbReference type="NCBIfam" id="NF002299">
    <property type="entry name" value="PRK01222.1-6"/>
    <property type="match status" value="1"/>
</dbReference>
<dbReference type="PANTHER" id="PTHR42894">
    <property type="entry name" value="N-(5'-PHOSPHORIBOSYL)ANTHRANILATE ISOMERASE"/>
    <property type="match status" value="1"/>
</dbReference>
<dbReference type="PANTHER" id="PTHR42894:SF1">
    <property type="entry name" value="N-(5'-PHOSPHORIBOSYL)ANTHRANILATE ISOMERASE"/>
    <property type="match status" value="1"/>
</dbReference>
<dbReference type="Pfam" id="PF00697">
    <property type="entry name" value="PRAI"/>
    <property type="match status" value="1"/>
</dbReference>
<dbReference type="SUPFAM" id="SSF51366">
    <property type="entry name" value="Ribulose-phoshate binding barrel"/>
    <property type="match status" value="1"/>
</dbReference>
<comment type="catalytic activity">
    <reaction evidence="1">
        <text>N-(5-phospho-beta-D-ribosyl)anthranilate = 1-(2-carboxyphenylamino)-1-deoxy-D-ribulose 5-phosphate</text>
        <dbReference type="Rhea" id="RHEA:21540"/>
        <dbReference type="ChEBI" id="CHEBI:18277"/>
        <dbReference type="ChEBI" id="CHEBI:58613"/>
        <dbReference type="EC" id="5.3.1.24"/>
    </reaction>
</comment>
<comment type="pathway">
    <text evidence="1">Amino-acid biosynthesis; L-tryptophan biosynthesis; L-tryptophan from chorismate: step 3/5.</text>
</comment>
<comment type="similarity">
    <text evidence="1">Belongs to the TrpF family.</text>
</comment>
<organism>
    <name type="scientific">Bordetella parapertussis (strain 12822 / ATCC BAA-587 / NCTC 13253)</name>
    <dbReference type="NCBI Taxonomy" id="257311"/>
    <lineage>
        <taxon>Bacteria</taxon>
        <taxon>Pseudomonadati</taxon>
        <taxon>Pseudomonadota</taxon>
        <taxon>Betaproteobacteria</taxon>
        <taxon>Burkholderiales</taxon>
        <taxon>Alcaligenaceae</taxon>
        <taxon>Bordetella</taxon>
    </lineage>
</organism>
<sequence length="218" mass="23079">MRTRVKICGLTREQDIASAVRAGADAIGFVFYPASKRHVDPVRAAQLRREVPAFVDVVALFVNPRPDEVQAVLDHVAPDLLQFHGDETPQDCGRYGRRYLRAFRAGAPGLDSTAGLAAACRQYADAAGWLFDSYSAGYGGSGQGFDHGLLAGVQADPASRAIVLAGGLHPGNVADAVRAVRPWAVDVSSGVEDAPGVKSADKIRQLMAAIKSVDQVAR</sequence>
<protein>
    <recommendedName>
        <fullName evidence="1">N-(5'-phosphoribosyl)anthranilate isomerase</fullName>
        <shortName evidence="1">PRAI</shortName>
        <ecNumber evidence="1">5.3.1.24</ecNumber>
    </recommendedName>
</protein>